<sequence length="473" mass="54036">MEGLLLLLPTAIIALYLYISLIRRSRKKHNLPPGSDGWPFLGETFSYLKPHSAISIGRFMEDHISRYGKIYRSNLFGEPTIVSADAELNRFVLQNEGRLFECSYPRSIGGILGKWSMLVLVGDMHRDMRMISLNFMSAARLRTRLMPEVERQTLLVLRSWREGSTFSAQEEAKKFTFNLMAKHIMSMDPGEPETEMLRREYITFMKGVVSAPLNFPGTPYWKALKSRSSILAVIERKMEERIGRRDRGDGGVEDDDLLGWAMNQSNLLKEQILDLLLSLLFAGHETSSMALALAIYFLESCPEAVRDLRDEHLAISMSGKEGECGLSWDQYKQMEFTHCVINESLRLGNVVRFVHRKAIQDVQYKGYDIPCGWKVLPVFAAVHLDSTLYSDPHRFNPWRWQSSSSKTTAANFMPYGGGLRLCTGSELAKLEMAVFLHHLVLNYQWKLAEPEQAFAYPFLDFPKGLQIKVRAIT</sequence>
<accession>A0A517FNB9</accession>
<name>C9B52_PARPY</name>
<dbReference type="EC" id="1.14.14.-" evidence="3"/>
<dbReference type="EMBL" id="MK636701">
    <property type="protein sequence ID" value="QDS03627.1"/>
    <property type="molecule type" value="mRNA"/>
</dbReference>
<dbReference type="SMR" id="A0A517FNB9"/>
<dbReference type="UniPathway" id="UPA00296"/>
<dbReference type="GO" id="GO:0016020">
    <property type="term" value="C:membrane"/>
    <property type="evidence" value="ECO:0007669"/>
    <property type="project" value="UniProtKB-SubCell"/>
</dbReference>
<dbReference type="GO" id="GO:0020037">
    <property type="term" value="F:heme binding"/>
    <property type="evidence" value="ECO:0007669"/>
    <property type="project" value="InterPro"/>
</dbReference>
<dbReference type="GO" id="GO:0005506">
    <property type="term" value="F:iron ion binding"/>
    <property type="evidence" value="ECO:0007669"/>
    <property type="project" value="InterPro"/>
</dbReference>
<dbReference type="GO" id="GO:0004497">
    <property type="term" value="F:monooxygenase activity"/>
    <property type="evidence" value="ECO:0007669"/>
    <property type="project" value="InterPro"/>
</dbReference>
<dbReference type="GO" id="GO:0016705">
    <property type="term" value="F:oxidoreductase activity, acting on paired donors, with incorporation or reduction of molecular oxygen"/>
    <property type="evidence" value="ECO:0000314"/>
    <property type="project" value="UniProtKB"/>
</dbReference>
<dbReference type="GO" id="GO:0016132">
    <property type="term" value="P:brassinosteroid biosynthetic process"/>
    <property type="evidence" value="ECO:0007669"/>
    <property type="project" value="UniProtKB-KW"/>
</dbReference>
<dbReference type="GO" id="GO:0010268">
    <property type="term" value="P:brassinosteroid homeostasis"/>
    <property type="evidence" value="ECO:0007669"/>
    <property type="project" value="TreeGrafter"/>
</dbReference>
<dbReference type="GO" id="GO:0008203">
    <property type="term" value="P:cholesterol metabolic process"/>
    <property type="evidence" value="ECO:0000314"/>
    <property type="project" value="UniProtKB"/>
</dbReference>
<dbReference type="GO" id="GO:0006694">
    <property type="term" value="P:steroid biosynthetic process"/>
    <property type="evidence" value="ECO:0000314"/>
    <property type="project" value="UniProtKB"/>
</dbReference>
<dbReference type="CDD" id="cd11043">
    <property type="entry name" value="CYP90-like"/>
    <property type="match status" value="1"/>
</dbReference>
<dbReference type="FunFam" id="1.10.630.10:FF:000061">
    <property type="entry name" value="Cytochrome P450 90B1"/>
    <property type="match status" value="1"/>
</dbReference>
<dbReference type="Gene3D" id="1.10.630.10">
    <property type="entry name" value="Cytochrome P450"/>
    <property type="match status" value="1"/>
</dbReference>
<dbReference type="InterPro" id="IPR001128">
    <property type="entry name" value="Cyt_P450"/>
</dbReference>
<dbReference type="InterPro" id="IPR002401">
    <property type="entry name" value="Cyt_P450_E_grp-I"/>
</dbReference>
<dbReference type="InterPro" id="IPR036396">
    <property type="entry name" value="Cyt_P450_sf"/>
</dbReference>
<dbReference type="PANTHER" id="PTHR24286">
    <property type="entry name" value="CYTOCHROME P450 26"/>
    <property type="match status" value="1"/>
</dbReference>
<dbReference type="PANTHER" id="PTHR24286:SF194">
    <property type="entry name" value="STEROID (22S)-HYDROXYLASE"/>
    <property type="match status" value="1"/>
</dbReference>
<dbReference type="Pfam" id="PF00067">
    <property type="entry name" value="p450"/>
    <property type="match status" value="1"/>
</dbReference>
<dbReference type="PRINTS" id="PR00463">
    <property type="entry name" value="EP450I"/>
</dbReference>
<dbReference type="PRINTS" id="PR00385">
    <property type="entry name" value="P450"/>
</dbReference>
<dbReference type="SUPFAM" id="SSF48264">
    <property type="entry name" value="Cytochrome P450"/>
    <property type="match status" value="1"/>
</dbReference>
<reference key="1">
    <citation type="journal article" date="2019" name="Nat. Commun.">
        <title>Repeated evolution of cytochrome P450-mediated spiroketal steroid biosynthesis in plants.</title>
        <authorList>
            <person name="Christ B."/>
            <person name="Xu C."/>
            <person name="Xu M."/>
            <person name="Li F.-S."/>
            <person name="Wada N."/>
            <person name="Mitchell A.J."/>
            <person name="Han X.-L."/>
            <person name="Wen M.-L."/>
            <person name="Fujita M."/>
            <person name="Weng J.-K."/>
        </authorList>
    </citation>
    <scope>NUCLEOTIDE SEQUENCE [MRNA]</scope>
    <scope>FUNCTION</scope>
    <scope>MUTAGENESIS OF PHE-59; ARG-106; GLY-109; LEU-145; VAL-149; THR-203; SER-278; ALA-282 AND TYR-364</scope>
    <scope>CATALYTIC ACTIVITY</scope>
    <scope>PATHWAY</scope>
    <scope>TISSUE SPECIFICITY</scope>
    <source>
        <tissue>Fruit</tissue>
        <tissue>Leaf</tissue>
        <tissue>Root</tissue>
        <tissue>Stem</tissue>
    </source>
</reference>
<feature type="chain" id="PRO_0000456409" description="Cholesterol 22-monohydroxylase CYP90B52">
    <location>
        <begin position="1"/>
        <end position="473"/>
    </location>
</feature>
<feature type="transmembrane region" description="Helical" evidence="2">
    <location>
        <begin position="2"/>
        <end position="22"/>
    </location>
</feature>
<feature type="binding site" description="axial binding residue" evidence="1">
    <location>
        <position position="422"/>
    </location>
    <ligand>
        <name>heme</name>
        <dbReference type="ChEBI" id="CHEBI:30413"/>
    </ligand>
    <ligandPart>
        <name>Fe</name>
        <dbReference type="ChEBI" id="CHEBI:18248"/>
    </ligandPart>
</feature>
<feature type="mutagenesis site" description="Mimicking CYP90G4, increased cholesterol 16S,22S-dihydroxylase activity and production of furostanol-type steroid; when associated with K-106; A-109; F-145; S-149; S-203; G-278; G-282 and F-364." evidence="3">
    <original>F</original>
    <variation>Y</variation>
    <location>
        <position position="59"/>
    </location>
</feature>
<feature type="mutagenesis site" description="Mimicking CYP90G4, increased cholesterol 16S,22S-dihydroxylase activity and production of furostanol-type steroid; when associated with Y-59; A-109; F-145; S-149; S-203; G-278; G-282 and F-364." evidence="3">
    <original>R</original>
    <variation>K</variation>
    <location>
        <position position="106"/>
    </location>
</feature>
<feature type="mutagenesis site" description="Mimicking CYP90G4, increased cholesterol 16S,22S-dihydroxylase activity and production of furostanol-type steroid; when associated with Y-59; K-106; F-145; S-149; S-203; G-278; G-282 and F-364." evidence="3">
    <original>G</original>
    <variation>A</variation>
    <location>
        <position position="109"/>
    </location>
</feature>
<feature type="mutagenesis site" description="Mimicking CYP90G4, increased cholesterol 16S,22S-dihydroxylase activity and production of furostanol-type steroid; when associated with Y-59; K-106; A-109; S-149; S-203; G-278; G-282 and F-364." evidence="3">
    <original>L</original>
    <variation>F</variation>
    <location>
        <position position="145"/>
    </location>
</feature>
<feature type="mutagenesis site" description="Mimicking CYP90G4, increased cholesterol 16S,22S-dihydroxylase activity and production of furostanol-type steroid; when associated with Y-59; K-106; A-109; F-145; S-203; G-278; G-282 and F-364." evidence="3">
    <original>V</original>
    <variation>S</variation>
    <location>
        <position position="149"/>
    </location>
</feature>
<feature type="mutagenesis site" description="Mimicking CYP90G4, increased cholesterol 16S,22S-dihydroxylase activity and production of furostanol-type steroid; when associated with Y-59; K-106; A-109; F-145; S-149; G-278; G-282 and F-364." evidence="3">
    <original>T</original>
    <variation>S</variation>
    <location>
        <position position="203"/>
    </location>
</feature>
<feature type="mutagenesis site" description="Mimicking CYP90G4, increased cholesterol 16S,22S-dihydroxylase activity and production of furostanol-type steroid; when associated with Y-59; K-106; A-109; F-145; S-149; S-203; G-282 and F-364." evidence="3">
    <original>S</original>
    <variation>G</variation>
    <location>
        <position position="278"/>
    </location>
</feature>
<feature type="mutagenesis site" description="Mimicking CYP90G4, increased cholesterol 16S,22S-dihydroxylase activity and production of furostanol-type steroid; when associated with Y-59; K-106; A-109; F-145; S-149; S-203; G-278 and F-364." evidence="3">
    <original>A</original>
    <variation>G</variation>
    <location>
        <position position="282"/>
    </location>
</feature>
<feature type="mutagenesis site" description="Mimicking CYP90G4, increased cholesterol 16S,22S-dihydroxylase activity and production of furostanol-type steroid; when associated with Y-59; K-106; A-109; F-145; S-149; S-203; G-278 and G-282." evidence="3">
    <original>Y</original>
    <variation>F</variation>
    <location>
        <position position="364"/>
    </location>
</feature>
<evidence type="ECO:0000250" key="1">
    <source>
        <dbReference type="UniProtKB" id="P04798"/>
    </source>
</evidence>
<evidence type="ECO:0000255" key="2"/>
<evidence type="ECO:0000269" key="3">
    <source>
    </source>
</evidence>
<evidence type="ECO:0000303" key="4">
    <source>
    </source>
</evidence>
<evidence type="ECO:0000305" key="5"/>
<proteinExistence type="evidence at protein level"/>
<comment type="function">
    <text evidence="3">Canonical brassinosteroid (BR)-biosynthetic enzyme capable of converting cholesterol to 22S-hydroxycholesterol via sterol-C22 hydroxylation.</text>
</comment>
<comment type="catalytic activity">
    <reaction evidence="3">
        <text>cholesterol + reduced [NADPH--hemoprotein reductase] + O2 = (22S)-22-hydroxycholesterol + oxidized [NADPH--hemoprotein reductase] + H2O + H(+)</text>
        <dbReference type="Rhea" id="RHEA:69839"/>
        <dbReference type="Rhea" id="RHEA-COMP:11964"/>
        <dbReference type="Rhea" id="RHEA-COMP:11965"/>
        <dbReference type="ChEBI" id="CHEBI:1301"/>
        <dbReference type="ChEBI" id="CHEBI:15377"/>
        <dbReference type="ChEBI" id="CHEBI:15378"/>
        <dbReference type="ChEBI" id="CHEBI:15379"/>
        <dbReference type="ChEBI" id="CHEBI:16113"/>
        <dbReference type="ChEBI" id="CHEBI:57618"/>
        <dbReference type="ChEBI" id="CHEBI:58210"/>
    </reaction>
    <physiologicalReaction direction="left-to-right" evidence="3">
        <dbReference type="Rhea" id="RHEA:69840"/>
    </physiologicalReaction>
</comment>
<comment type="pathway">
    <text evidence="3">Steroid metabolism; cholesterol metabolism.</text>
</comment>
<comment type="subcellular location">
    <subcellularLocation>
        <location evidence="2">Membrane</location>
        <topology evidence="2">Single-pass membrane protein</topology>
    </subcellularLocation>
</comment>
<comment type="tissue specificity">
    <text evidence="3">Mainly expressed in leaves and roots and, at low levels, in fruits and stems.</text>
</comment>
<comment type="similarity">
    <text evidence="5">Belongs to the cytochrome P450 family.</text>
</comment>
<protein>
    <recommendedName>
        <fullName evidence="4">Cholesterol 22-monohydroxylase CYP90B52</fullName>
        <ecNumber evidence="3">1.14.14.-</ecNumber>
    </recommendedName>
    <alternativeName>
        <fullName evidence="4">Cytochrome P450 CYP90B52</fullName>
        <shortName evidence="4">PpCYP90B52</shortName>
    </alternativeName>
</protein>
<gene>
    <name evidence="4" type="primary">CYP90B52</name>
</gene>
<keyword id="KW-1069">Brassinosteroid biosynthesis</keyword>
<keyword id="KW-0153">Cholesterol metabolism</keyword>
<keyword id="KW-0408">Iron</keyword>
<keyword id="KW-0444">Lipid biosynthesis</keyword>
<keyword id="KW-0443">Lipid metabolism</keyword>
<keyword id="KW-0472">Membrane</keyword>
<keyword id="KW-0479">Metal-binding</keyword>
<keyword id="KW-0560">Oxidoreductase</keyword>
<keyword id="KW-0752">Steroid biosynthesis</keyword>
<keyword id="KW-0753">Steroid metabolism</keyword>
<keyword id="KW-1207">Sterol metabolism</keyword>
<keyword id="KW-0812">Transmembrane</keyword>
<keyword id="KW-1133">Transmembrane helix</keyword>
<organism>
    <name type="scientific">Paris polyphylla</name>
    <name type="common">Daiswa polyphylla</name>
    <dbReference type="NCBI Taxonomy" id="49666"/>
    <lineage>
        <taxon>Eukaryota</taxon>
        <taxon>Viridiplantae</taxon>
        <taxon>Streptophyta</taxon>
        <taxon>Embryophyta</taxon>
        <taxon>Tracheophyta</taxon>
        <taxon>Spermatophyta</taxon>
        <taxon>Magnoliopsida</taxon>
        <taxon>Liliopsida</taxon>
        <taxon>Liliales</taxon>
        <taxon>Melanthiaceae</taxon>
        <taxon>Paris</taxon>
    </lineage>
</organism>